<reference key="1">
    <citation type="journal article" date="2010" name="PLoS Genet.">
        <title>Genome sequence of the plant growth promoting endophytic bacterium Enterobacter sp. 638.</title>
        <authorList>
            <person name="Taghavi S."/>
            <person name="van der Lelie D."/>
            <person name="Hoffman A."/>
            <person name="Zhang Y.B."/>
            <person name="Walla M.D."/>
            <person name="Vangronsveld J."/>
            <person name="Newman L."/>
            <person name="Monchy S."/>
        </authorList>
    </citation>
    <scope>NUCLEOTIDE SEQUENCE [LARGE SCALE GENOMIC DNA]</scope>
    <source>
        <strain>638</strain>
    </source>
</reference>
<protein>
    <recommendedName>
        <fullName evidence="1">ATP synthase subunit delta</fullName>
    </recommendedName>
    <alternativeName>
        <fullName evidence="1">ATP synthase F(1) sector subunit delta</fullName>
    </alternativeName>
    <alternativeName>
        <fullName evidence="1">F-type ATPase subunit delta</fullName>
        <shortName evidence="1">F-ATPase subunit delta</shortName>
    </alternativeName>
</protein>
<organism>
    <name type="scientific">Enterobacter sp. (strain 638)</name>
    <dbReference type="NCBI Taxonomy" id="399742"/>
    <lineage>
        <taxon>Bacteria</taxon>
        <taxon>Pseudomonadati</taxon>
        <taxon>Pseudomonadota</taxon>
        <taxon>Gammaproteobacteria</taxon>
        <taxon>Enterobacterales</taxon>
        <taxon>Enterobacteriaceae</taxon>
        <taxon>Enterobacter</taxon>
    </lineage>
</organism>
<proteinExistence type="inferred from homology"/>
<sequence>MSEFVTVARPYAKAAFDFAVEHQNVDRWQDMLAFAAEVTKNEQMAEMLSGALAPETLAASFIAVCGEQLDTSGQNLIKVMAENGRLRVLPDVLEQFEHLRALSEATAEVEVTSANELSEEQLAKITAAMEKRLSRKVKLNCKIDKSVMAGVIIRAGDMVIDGSVRGRLQRLSDVLQS</sequence>
<dbReference type="EMBL" id="CP000653">
    <property type="protein sequence ID" value="ABP62782.1"/>
    <property type="molecule type" value="Genomic_DNA"/>
</dbReference>
<dbReference type="RefSeq" id="WP_015961085.1">
    <property type="nucleotide sequence ID" value="NC_009436.1"/>
</dbReference>
<dbReference type="SMR" id="A4WGF2"/>
<dbReference type="STRING" id="399742.Ent638_4129"/>
<dbReference type="KEGG" id="ent:Ent638_4129"/>
<dbReference type="eggNOG" id="COG0712">
    <property type="taxonomic scope" value="Bacteria"/>
</dbReference>
<dbReference type="HOGENOM" id="CLU_085114_3_0_6"/>
<dbReference type="OrthoDB" id="9816221at2"/>
<dbReference type="Proteomes" id="UP000000230">
    <property type="component" value="Chromosome"/>
</dbReference>
<dbReference type="GO" id="GO:0005886">
    <property type="term" value="C:plasma membrane"/>
    <property type="evidence" value="ECO:0007669"/>
    <property type="project" value="UniProtKB-SubCell"/>
</dbReference>
<dbReference type="GO" id="GO:0045259">
    <property type="term" value="C:proton-transporting ATP synthase complex"/>
    <property type="evidence" value="ECO:0007669"/>
    <property type="project" value="UniProtKB-KW"/>
</dbReference>
<dbReference type="GO" id="GO:0046933">
    <property type="term" value="F:proton-transporting ATP synthase activity, rotational mechanism"/>
    <property type="evidence" value="ECO:0007669"/>
    <property type="project" value="UniProtKB-UniRule"/>
</dbReference>
<dbReference type="FunFam" id="1.10.520.20:FF:000001">
    <property type="entry name" value="ATP synthase subunit delta"/>
    <property type="match status" value="1"/>
</dbReference>
<dbReference type="Gene3D" id="1.10.520.20">
    <property type="entry name" value="N-terminal domain of the delta subunit of the F1F0-ATP synthase"/>
    <property type="match status" value="1"/>
</dbReference>
<dbReference type="HAMAP" id="MF_01416">
    <property type="entry name" value="ATP_synth_delta_bact"/>
    <property type="match status" value="1"/>
</dbReference>
<dbReference type="InterPro" id="IPR026015">
    <property type="entry name" value="ATP_synth_OSCP/delta_N_sf"/>
</dbReference>
<dbReference type="InterPro" id="IPR020781">
    <property type="entry name" value="ATPase_OSCP/d_CS"/>
</dbReference>
<dbReference type="InterPro" id="IPR000711">
    <property type="entry name" value="ATPase_OSCP/dsu"/>
</dbReference>
<dbReference type="NCBIfam" id="TIGR01145">
    <property type="entry name" value="ATP_synt_delta"/>
    <property type="match status" value="1"/>
</dbReference>
<dbReference type="NCBIfam" id="NF004402">
    <property type="entry name" value="PRK05758.2-2"/>
    <property type="match status" value="1"/>
</dbReference>
<dbReference type="NCBIfam" id="NF004404">
    <property type="entry name" value="PRK05758.2-5"/>
    <property type="match status" value="1"/>
</dbReference>
<dbReference type="PANTHER" id="PTHR11910">
    <property type="entry name" value="ATP SYNTHASE DELTA CHAIN"/>
    <property type="match status" value="1"/>
</dbReference>
<dbReference type="Pfam" id="PF00213">
    <property type="entry name" value="OSCP"/>
    <property type="match status" value="1"/>
</dbReference>
<dbReference type="PRINTS" id="PR00125">
    <property type="entry name" value="ATPASEDELTA"/>
</dbReference>
<dbReference type="SUPFAM" id="SSF47928">
    <property type="entry name" value="N-terminal domain of the delta subunit of the F1F0-ATP synthase"/>
    <property type="match status" value="1"/>
</dbReference>
<dbReference type="PROSITE" id="PS00389">
    <property type="entry name" value="ATPASE_DELTA"/>
    <property type="match status" value="1"/>
</dbReference>
<accession>A4WGF2</accession>
<feature type="chain" id="PRO_1000184706" description="ATP synthase subunit delta">
    <location>
        <begin position="1"/>
        <end position="177"/>
    </location>
</feature>
<keyword id="KW-0066">ATP synthesis</keyword>
<keyword id="KW-0997">Cell inner membrane</keyword>
<keyword id="KW-1003">Cell membrane</keyword>
<keyword id="KW-0139">CF(1)</keyword>
<keyword id="KW-0375">Hydrogen ion transport</keyword>
<keyword id="KW-0406">Ion transport</keyword>
<keyword id="KW-0472">Membrane</keyword>
<keyword id="KW-0813">Transport</keyword>
<evidence type="ECO:0000255" key="1">
    <source>
        <dbReference type="HAMAP-Rule" id="MF_01416"/>
    </source>
</evidence>
<gene>
    <name evidence="1" type="primary">atpH</name>
    <name type="ordered locus">Ent638_4129</name>
</gene>
<name>ATPD_ENT38</name>
<comment type="function">
    <text evidence="1">F(1)F(0) ATP synthase produces ATP from ADP in the presence of a proton or sodium gradient. F-type ATPases consist of two structural domains, F(1) containing the extramembraneous catalytic core and F(0) containing the membrane proton channel, linked together by a central stalk and a peripheral stalk. During catalysis, ATP synthesis in the catalytic domain of F(1) is coupled via a rotary mechanism of the central stalk subunits to proton translocation.</text>
</comment>
<comment type="function">
    <text evidence="1">This protein is part of the stalk that links CF(0) to CF(1). It either transmits conformational changes from CF(0) to CF(1) or is implicated in proton conduction.</text>
</comment>
<comment type="subunit">
    <text evidence="1">F-type ATPases have 2 components, F(1) - the catalytic core - and F(0) - the membrane proton channel. F(1) has five subunits: alpha(3), beta(3), gamma(1), delta(1), epsilon(1). F(0) has three main subunits: a(1), b(2) and c(10-14). The alpha and beta chains form an alternating ring which encloses part of the gamma chain. F(1) is attached to F(0) by a central stalk formed by the gamma and epsilon chains, while a peripheral stalk is formed by the delta and b chains.</text>
</comment>
<comment type="subcellular location">
    <subcellularLocation>
        <location evidence="1">Cell inner membrane</location>
        <topology evidence="1">Peripheral membrane protein</topology>
    </subcellularLocation>
</comment>
<comment type="similarity">
    <text evidence="1">Belongs to the ATPase delta chain family.</text>
</comment>